<name>TRMD_BRADU</name>
<feature type="chain" id="PRO_0000060341" description="tRNA (guanine-N(1)-)-methyltransferase">
    <location>
        <begin position="1"/>
        <end position="255"/>
    </location>
</feature>
<feature type="region of interest" description="Disordered" evidence="2">
    <location>
        <begin position="236"/>
        <end position="255"/>
    </location>
</feature>
<feature type="compositionally biased region" description="Basic residues" evidence="2">
    <location>
        <begin position="244"/>
        <end position="255"/>
    </location>
</feature>
<feature type="binding site" evidence="1">
    <location>
        <position position="121"/>
    </location>
    <ligand>
        <name>S-adenosyl-L-methionine</name>
        <dbReference type="ChEBI" id="CHEBI:59789"/>
    </ligand>
</feature>
<feature type="binding site" evidence="1">
    <location>
        <begin position="141"/>
        <end position="146"/>
    </location>
    <ligand>
        <name>S-adenosyl-L-methionine</name>
        <dbReference type="ChEBI" id="CHEBI:59789"/>
    </ligand>
</feature>
<comment type="function">
    <text evidence="1">Specifically methylates guanosine-37 in various tRNAs.</text>
</comment>
<comment type="catalytic activity">
    <reaction evidence="1">
        <text>guanosine(37) in tRNA + S-adenosyl-L-methionine = N(1)-methylguanosine(37) in tRNA + S-adenosyl-L-homocysteine + H(+)</text>
        <dbReference type="Rhea" id="RHEA:36899"/>
        <dbReference type="Rhea" id="RHEA-COMP:10145"/>
        <dbReference type="Rhea" id="RHEA-COMP:10147"/>
        <dbReference type="ChEBI" id="CHEBI:15378"/>
        <dbReference type="ChEBI" id="CHEBI:57856"/>
        <dbReference type="ChEBI" id="CHEBI:59789"/>
        <dbReference type="ChEBI" id="CHEBI:73542"/>
        <dbReference type="ChEBI" id="CHEBI:74269"/>
        <dbReference type="EC" id="2.1.1.228"/>
    </reaction>
</comment>
<comment type="subunit">
    <text evidence="1">Homodimer.</text>
</comment>
<comment type="subcellular location">
    <subcellularLocation>
        <location evidence="1">Cytoplasm</location>
    </subcellularLocation>
</comment>
<comment type="similarity">
    <text evidence="1">Belongs to the RNA methyltransferase TrmD family.</text>
</comment>
<sequence length="255" mass="27151">MTTSSPWRATVLTLFPEMFPGPLGVSLAGRALASGLWQLEARDIRASATDRHRSVDDTPAGGGPGMVLRADVLAAAIDAAEIGQGSSKERPRLLMSPRGRPLTQARVVELARGPGPLIVCGRFEGIDQRVIDGRGLEEVSIGDYVLSGGEIAALALIDACVRLLPGVMGKEASGTEESFSDGLLEYPQYTRPQLFEGVPIPEILTSGDHAKVAAWRRAEAEALTAARRPDLWAQIPVKAPNRAGRQKTPKNKTDG</sequence>
<keyword id="KW-0963">Cytoplasm</keyword>
<keyword id="KW-0489">Methyltransferase</keyword>
<keyword id="KW-1185">Reference proteome</keyword>
<keyword id="KW-0949">S-adenosyl-L-methionine</keyword>
<keyword id="KW-0808">Transferase</keyword>
<keyword id="KW-0819">tRNA processing</keyword>
<evidence type="ECO:0000255" key="1">
    <source>
        <dbReference type="HAMAP-Rule" id="MF_00605"/>
    </source>
</evidence>
<evidence type="ECO:0000256" key="2">
    <source>
        <dbReference type="SAM" id="MobiDB-lite"/>
    </source>
</evidence>
<organism>
    <name type="scientific">Bradyrhizobium diazoefficiens (strain JCM 10833 / BCRC 13528 / IAM 13628 / NBRC 14792 / USDA 110)</name>
    <dbReference type="NCBI Taxonomy" id="224911"/>
    <lineage>
        <taxon>Bacteria</taxon>
        <taxon>Pseudomonadati</taxon>
        <taxon>Pseudomonadota</taxon>
        <taxon>Alphaproteobacteria</taxon>
        <taxon>Hyphomicrobiales</taxon>
        <taxon>Nitrobacteraceae</taxon>
        <taxon>Bradyrhizobium</taxon>
    </lineage>
</organism>
<reference key="1">
    <citation type="journal article" date="2002" name="DNA Res.">
        <title>Complete genomic sequence of nitrogen-fixing symbiotic bacterium Bradyrhizobium japonicum USDA110.</title>
        <authorList>
            <person name="Kaneko T."/>
            <person name="Nakamura Y."/>
            <person name="Sato S."/>
            <person name="Minamisawa K."/>
            <person name="Uchiumi T."/>
            <person name="Sasamoto S."/>
            <person name="Watanabe A."/>
            <person name="Idesawa K."/>
            <person name="Iriguchi M."/>
            <person name="Kawashima K."/>
            <person name="Kohara M."/>
            <person name="Matsumoto M."/>
            <person name="Shimpo S."/>
            <person name="Tsuruoka H."/>
            <person name="Wada T."/>
            <person name="Yamada M."/>
            <person name="Tabata S."/>
        </authorList>
    </citation>
    <scope>NUCLEOTIDE SEQUENCE [LARGE SCALE GENOMIC DNA]</scope>
    <source>
        <strain>JCM 10833 / BCRC 13528 / IAM 13628 / NBRC 14792 / USDA 110</strain>
    </source>
</reference>
<gene>
    <name evidence="1" type="primary">trmD</name>
    <name type="ordered locus">blr0486</name>
</gene>
<dbReference type="EC" id="2.1.1.228" evidence="1"/>
<dbReference type="EMBL" id="BA000040">
    <property type="protein sequence ID" value="BAC45751.1"/>
    <property type="molecule type" value="Genomic_DNA"/>
</dbReference>
<dbReference type="RefSeq" id="NP_767126.1">
    <property type="nucleotide sequence ID" value="NC_004463.1"/>
</dbReference>
<dbReference type="RefSeq" id="WP_011083317.1">
    <property type="nucleotide sequence ID" value="NC_004463.1"/>
</dbReference>
<dbReference type="SMR" id="Q89X36"/>
<dbReference type="FunCoup" id="Q89X36">
    <property type="interactions" value="607"/>
</dbReference>
<dbReference type="STRING" id="224911.AAV28_41685"/>
<dbReference type="EnsemblBacteria" id="BAC45751">
    <property type="protein sequence ID" value="BAC45751"/>
    <property type="gene ID" value="BAC45751"/>
</dbReference>
<dbReference type="GeneID" id="46495631"/>
<dbReference type="KEGG" id="bja:blr0486"/>
<dbReference type="PATRIC" id="fig|224911.44.peg.9020"/>
<dbReference type="eggNOG" id="COG0336">
    <property type="taxonomic scope" value="Bacteria"/>
</dbReference>
<dbReference type="HOGENOM" id="CLU_047363_0_1_5"/>
<dbReference type="InParanoid" id="Q89X36"/>
<dbReference type="OrthoDB" id="9807416at2"/>
<dbReference type="PhylomeDB" id="Q89X36"/>
<dbReference type="Proteomes" id="UP000002526">
    <property type="component" value="Chromosome"/>
</dbReference>
<dbReference type="GO" id="GO:0005829">
    <property type="term" value="C:cytosol"/>
    <property type="evidence" value="ECO:0000318"/>
    <property type="project" value="GO_Central"/>
</dbReference>
<dbReference type="GO" id="GO:0052906">
    <property type="term" value="F:tRNA (guanine(37)-N1)-methyltransferase activity"/>
    <property type="evidence" value="ECO:0000318"/>
    <property type="project" value="GO_Central"/>
</dbReference>
<dbReference type="GO" id="GO:0002939">
    <property type="term" value="P:tRNA N1-guanine methylation"/>
    <property type="evidence" value="ECO:0000318"/>
    <property type="project" value="GO_Central"/>
</dbReference>
<dbReference type="CDD" id="cd18080">
    <property type="entry name" value="TrmD-like"/>
    <property type="match status" value="1"/>
</dbReference>
<dbReference type="FunFam" id="1.10.1270.20:FF:000004">
    <property type="entry name" value="tRNA (guanine-N(1)-)-methyltransferase"/>
    <property type="match status" value="1"/>
</dbReference>
<dbReference type="FunFam" id="3.40.1280.10:FF:000001">
    <property type="entry name" value="tRNA (guanine-N(1)-)-methyltransferase"/>
    <property type="match status" value="1"/>
</dbReference>
<dbReference type="Gene3D" id="3.40.1280.10">
    <property type="match status" value="1"/>
</dbReference>
<dbReference type="Gene3D" id="1.10.1270.20">
    <property type="entry name" value="tRNA(m1g37)methyltransferase, domain 2"/>
    <property type="match status" value="1"/>
</dbReference>
<dbReference type="HAMAP" id="MF_00605">
    <property type="entry name" value="TrmD"/>
    <property type="match status" value="1"/>
</dbReference>
<dbReference type="InterPro" id="IPR029028">
    <property type="entry name" value="Alpha/beta_knot_MTases"/>
</dbReference>
<dbReference type="InterPro" id="IPR023148">
    <property type="entry name" value="tRNA_m1G_MeTrfase_C_sf"/>
</dbReference>
<dbReference type="InterPro" id="IPR002649">
    <property type="entry name" value="tRNA_m1G_MeTrfase_TrmD"/>
</dbReference>
<dbReference type="InterPro" id="IPR029026">
    <property type="entry name" value="tRNA_m1G_MTases_N"/>
</dbReference>
<dbReference type="InterPro" id="IPR016009">
    <property type="entry name" value="tRNA_MeTrfase_TRMD/TRM10"/>
</dbReference>
<dbReference type="NCBIfam" id="NF000648">
    <property type="entry name" value="PRK00026.1"/>
    <property type="match status" value="1"/>
</dbReference>
<dbReference type="NCBIfam" id="TIGR00088">
    <property type="entry name" value="trmD"/>
    <property type="match status" value="1"/>
</dbReference>
<dbReference type="PANTHER" id="PTHR46417">
    <property type="entry name" value="TRNA (GUANINE-N(1)-)-METHYLTRANSFERASE"/>
    <property type="match status" value="1"/>
</dbReference>
<dbReference type="PANTHER" id="PTHR46417:SF1">
    <property type="entry name" value="TRNA (GUANINE-N(1)-)-METHYLTRANSFERASE"/>
    <property type="match status" value="1"/>
</dbReference>
<dbReference type="Pfam" id="PF01746">
    <property type="entry name" value="tRNA_m1G_MT"/>
    <property type="match status" value="1"/>
</dbReference>
<dbReference type="PIRSF" id="PIRSF000386">
    <property type="entry name" value="tRNA_mtase"/>
    <property type="match status" value="1"/>
</dbReference>
<dbReference type="SUPFAM" id="SSF75217">
    <property type="entry name" value="alpha/beta knot"/>
    <property type="match status" value="1"/>
</dbReference>
<protein>
    <recommendedName>
        <fullName evidence="1">tRNA (guanine-N(1)-)-methyltransferase</fullName>
        <ecNumber evidence="1">2.1.1.228</ecNumber>
    </recommendedName>
    <alternativeName>
        <fullName evidence="1">M1G-methyltransferase</fullName>
    </alternativeName>
    <alternativeName>
        <fullName evidence="1">tRNA [GM37] methyltransferase</fullName>
    </alternativeName>
</protein>
<accession>Q89X36</accession>
<proteinExistence type="inferred from homology"/>